<organism>
    <name type="scientific">Staphylococcus aureus (strain MSSA476)</name>
    <dbReference type="NCBI Taxonomy" id="282459"/>
    <lineage>
        <taxon>Bacteria</taxon>
        <taxon>Bacillati</taxon>
        <taxon>Bacillota</taxon>
        <taxon>Bacilli</taxon>
        <taxon>Bacillales</taxon>
        <taxon>Staphylococcaceae</taxon>
        <taxon>Staphylococcus</taxon>
    </lineage>
</organism>
<protein>
    <recommendedName>
        <fullName evidence="1">Serine--tRNA ligase</fullName>
        <ecNumber evidence="1">6.1.1.11</ecNumber>
    </recommendedName>
    <alternativeName>
        <fullName evidence="1">Seryl-tRNA synthetase</fullName>
        <shortName evidence="1">SerRS</shortName>
    </alternativeName>
    <alternativeName>
        <fullName evidence="1">Seryl-tRNA(Ser/Sec) synthetase</fullName>
    </alternativeName>
</protein>
<feature type="chain" id="PRO_0000122122" description="Serine--tRNA ligase">
    <location>
        <begin position="1"/>
        <end position="428"/>
    </location>
</feature>
<feature type="binding site" evidence="1">
    <location>
        <begin position="231"/>
        <end position="233"/>
    </location>
    <ligand>
        <name>L-serine</name>
        <dbReference type="ChEBI" id="CHEBI:33384"/>
    </ligand>
</feature>
<feature type="binding site" evidence="1">
    <location>
        <begin position="262"/>
        <end position="264"/>
    </location>
    <ligand>
        <name>ATP</name>
        <dbReference type="ChEBI" id="CHEBI:30616"/>
    </ligand>
</feature>
<feature type="binding site" evidence="1">
    <location>
        <position position="285"/>
    </location>
    <ligand>
        <name>L-serine</name>
        <dbReference type="ChEBI" id="CHEBI:33384"/>
    </ligand>
</feature>
<feature type="binding site" evidence="1">
    <location>
        <begin position="349"/>
        <end position="352"/>
    </location>
    <ligand>
        <name>ATP</name>
        <dbReference type="ChEBI" id="CHEBI:30616"/>
    </ligand>
</feature>
<feature type="binding site" evidence="1">
    <location>
        <position position="385"/>
    </location>
    <ligand>
        <name>L-serine</name>
        <dbReference type="ChEBI" id="CHEBI:33384"/>
    </ligand>
</feature>
<keyword id="KW-0030">Aminoacyl-tRNA synthetase</keyword>
<keyword id="KW-0067">ATP-binding</keyword>
<keyword id="KW-0963">Cytoplasm</keyword>
<keyword id="KW-0436">Ligase</keyword>
<keyword id="KW-0547">Nucleotide-binding</keyword>
<keyword id="KW-0648">Protein biosynthesis</keyword>
<dbReference type="EC" id="6.1.1.11" evidence="1"/>
<dbReference type="EMBL" id="BX571857">
    <property type="protein sequence ID" value="CAG41781.1"/>
    <property type="molecule type" value="Genomic_DNA"/>
</dbReference>
<dbReference type="RefSeq" id="WP_000884343.1">
    <property type="nucleotide sequence ID" value="NC_002953.3"/>
</dbReference>
<dbReference type="SMR" id="Q6GD81"/>
<dbReference type="KEGG" id="sas:SAS0009"/>
<dbReference type="HOGENOM" id="CLU_023797_1_1_9"/>
<dbReference type="UniPathway" id="UPA00906">
    <property type="reaction ID" value="UER00895"/>
</dbReference>
<dbReference type="GO" id="GO:0005737">
    <property type="term" value="C:cytoplasm"/>
    <property type="evidence" value="ECO:0007669"/>
    <property type="project" value="UniProtKB-SubCell"/>
</dbReference>
<dbReference type="GO" id="GO:0005524">
    <property type="term" value="F:ATP binding"/>
    <property type="evidence" value="ECO:0007669"/>
    <property type="project" value="UniProtKB-UniRule"/>
</dbReference>
<dbReference type="GO" id="GO:0140096">
    <property type="term" value="F:catalytic activity, acting on a protein"/>
    <property type="evidence" value="ECO:0007669"/>
    <property type="project" value="UniProtKB-ARBA"/>
</dbReference>
<dbReference type="GO" id="GO:0004828">
    <property type="term" value="F:serine-tRNA ligase activity"/>
    <property type="evidence" value="ECO:0007669"/>
    <property type="project" value="UniProtKB-UniRule"/>
</dbReference>
<dbReference type="GO" id="GO:0016740">
    <property type="term" value="F:transferase activity"/>
    <property type="evidence" value="ECO:0007669"/>
    <property type="project" value="UniProtKB-ARBA"/>
</dbReference>
<dbReference type="GO" id="GO:0016260">
    <property type="term" value="P:selenocysteine biosynthetic process"/>
    <property type="evidence" value="ECO:0007669"/>
    <property type="project" value="UniProtKB-UniRule"/>
</dbReference>
<dbReference type="GO" id="GO:0006434">
    <property type="term" value="P:seryl-tRNA aminoacylation"/>
    <property type="evidence" value="ECO:0007669"/>
    <property type="project" value="UniProtKB-UniRule"/>
</dbReference>
<dbReference type="CDD" id="cd00770">
    <property type="entry name" value="SerRS_core"/>
    <property type="match status" value="1"/>
</dbReference>
<dbReference type="Gene3D" id="3.30.930.10">
    <property type="entry name" value="Bira Bifunctional Protein, Domain 2"/>
    <property type="match status" value="1"/>
</dbReference>
<dbReference type="Gene3D" id="1.10.287.40">
    <property type="entry name" value="Serine-tRNA synthetase, tRNA binding domain"/>
    <property type="match status" value="1"/>
</dbReference>
<dbReference type="HAMAP" id="MF_00176">
    <property type="entry name" value="Ser_tRNA_synth_type1"/>
    <property type="match status" value="1"/>
</dbReference>
<dbReference type="InterPro" id="IPR002314">
    <property type="entry name" value="aa-tRNA-synt_IIb"/>
</dbReference>
<dbReference type="InterPro" id="IPR006195">
    <property type="entry name" value="aa-tRNA-synth_II"/>
</dbReference>
<dbReference type="InterPro" id="IPR045864">
    <property type="entry name" value="aa-tRNA-synth_II/BPL/LPL"/>
</dbReference>
<dbReference type="InterPro" id="IPR002317">
    <property type="entry name" value="Ser-tRNA-ligase_type_1"/>
</dbReference>
<dbReference type="InterPro" id="IPR015866">
    <property type="entry name" value="Ser-tRNA-synth_1_N"/>
</dbReference>
<dbReference type="InterPro" id="IPR042103">
    <property type="entry name" value="SerRS_1_N_sf"/>
</dbReference>
<dbReference type="InterPro" id="IPR033729">
    <property type="entry name" value="SerRS_core"/>
</dbReference>
<dbReference type="InterPro" id="IPR010978">
    <property type="entry name" value="tRNA-bd_arm"/>
</dbReference>
<dbReference type="NCBIfam" id="TIGR00414">
    <property type="entry name" value="serS"/>
    <property type="match status" value="1"/>
</dbReference>
<dbReference type="PANTHER" id="PTHR43697:SF1">
    <property type="entry name" value="SERINE--TRNA LIGASE"/>
    <property type="match status" value="1"/>
</dbReference>
<dbReference type="PANTHER" id="PTHR43697">
    <property type="entry name" value="SERYL-TRNA SYNTHETASE"/>
    <property type="match status" value="1"/>
</dbReference>
<dbReference type="Pfam" id="PF02403">
    <property type="entry name" value="Seryl_tRNA_N"/>
    <property type="match status" value="1"/>
</dbReference>
<dbReference type="Pfam" id="PF00587">
    <property type="entry name" value="tRNA-synt_2b"/>
    <property type="match status" value="1"/>
</dbReference>
<dbReference type="PIRSF" id="PIRSF001529">
    <property type="entry name" value="Ser-tRNA-synth_IIa"/>
    <property type="match status" value="1"/>
</dbReference>
<dbReference type="PRINTS" id="PR00981">
    <property type="entry name" value="TRNASYNTHSER"/>
</dbReference>
<dbReference type="SUPFAM" id="SSF55681">
    <property type="entry name" value="Class II aaRS and biotin synthetases"/>
    <property type="match status" value="1"/>
</dbReference>
<dbReference type="SUPFAM" id="SSF46589">
    <property type="entry name" value="tRNA-binding arm"/>
    <property type="match status" value="1"/>
</dbReference>
<dbReference type="PROSITE" id="PS50862">
    <property type="entry name" value="AA_TRNA_LIGASE_II"/>
    <property type="match status" value="1"/>
</dbReference>
<gene>
    <name evidence="1" type="primary">serS</name>
    <name type="ordered locus">SAS0009</name>
</gene>
<proteinExistence type="inferred from homology"/>
<evidence type="ECO:0000255" key="1">
    <source>
        <dbReference type="HAMAP-Rule" id="MF_00176"/>
    </source>
</evidence>
<name>SYS_STAAS</name>
<accession>Q6GD81</accession>
<comment type="function">
    <text evidence="1">Catalyzes the attachment of serine to tRNA(Ser). Is also able to aminoacylate tRNA(Sec) with serine, to form the misacylated tRNA L-seryl-tRNA(Sec), which will be further converted into selenocysteinyl-tRNA(Sec).</text>
</comment>
<comment type="catalytic activity">
    <reaction evidence="1">
        <text>tRNA(Ser) + L-serine + ATP = L-seryl-tRNA(Ser) + AMP + diphosphate + H(+)</text>
        <dbReference type="Rhea" id="RHEA:12292"/>
        <dbReference type="Rhea" id="RHEA-COMP:9669"/>
        <dbReference type="Rhea" id="RHEA-COMP:9703"/>
        <dbReference type="ChEBI" id="CHEBI:15378"/>
        <dbReference type="ChEBI" id="CHEBI:30616"/>
        <dbReference type="ChEBI" id="CHEBI:33019"/>
        <dbReference type="ChEBI" id="CHEBI:33384"/>
        <dbReference type="ChEBI" id="CHEBI:78442"/>
        <dbReference type="ChEBI" id="CHEBI:78533"/>
        <dbReference type="ChEBI" id="CHEBI:456215"/>
        <dbReference type="EC" id="6.1.1.11"/>
    </reaction>
</comment>
<comment type="catalytic activity">
    <reaction evidence="1">
        <text>tRNA(Sec) + L-serine + ATP = L-seryl-tRNA(Sec) + AMP + diphosphate + H(+)</text>
        <dbReference type="Rhea" id="RHEA:42580"/>
        <dbReference type="Rhea" id="RHEA-COMP:9742"/>
        <dbReference type="Rhea" id="RHEA-COMP:10128"/>
        <dbReference type="ChEBI" id="CHEBI:15378"/>
        <dbReference type="ChEBI" id="CHEBI:30616"/>
        <dbReference type="ChEBI" id="CHEBI:33019"/>
        <dbReference type="ChEBI" id="CHEBI:33384"/>
        <dbReference type="ChEBI" id="CHEBI:78442"/>
        <dbReference type="ChEBI" id="CHEBI:78533"/>
        <dbReference type="ChEBI" id="CHEBI:456215"/>
        <dbReference type="EC" id="6.1.1.11"/>
    </reaction>
</comment>
<comment type="pathway">
    <text evidence="1">Aminoacyl-tRNA biosynthesis; selenocysteinyl-tRNA(Sec) biosynthesis; L-seryl-tRNA(Sec) from L-serine and tRNA(Sec): step 1/1.</text>
</comment>
<comment type="subunit">
    <text evidence="1">Homodimer. The tRNA molecule binds across the dimer.</text>
</comment>
<comment type="subcellular location">
    <subcellularLocation>
        <location evidence="1">Cytoplasm</location>
    </subcellularLocation>
</comment>
<comment type="domain">
    <text evidence="1">Consists of two distinct domains, a catalytic core and a N-terminal extension that is involved in tRNA binding.</text>
</comment>
<comment type="similarity">
    <text evidence="1">Belongs to the class-II aminoacyl-tRNA synthetase family. Type-1 seryl-tRNA synthetase subfamily.</text>
</comment>
<reference key="1">
    <citation type="journal article" date="2004" name="Proc. Natl. Acad. Sci. U.S.A.">
        <title>Complete genomes of two clinical Staphylococcus aureus strains: evidence for the rapid evolution of virulence and drug resistance.</title>
        <authorList>
            <person name="Holden M.T.G."/>
            <person name="Feil E.J."/>
            <person name="Lindsay J.A."/>
            <person name="Peacock S.J."/>
            <person name="Day N.P.J."/>
            <person name="Enright M.C."/>
            <person name="Foster T.J."/>
            <person name="Moore C.E."/>
            <person name="Hurst L."/>
            <person name="Atkin R."/>
            <person name="Barron A."/>
            <person name="Bason N."/>
            <person name="Bentley S.D."/>
            <person name="Chillingworth C."/>
            <person name="Chillingworth T."/>
            <person name="Churcher C."/>
            <person name="Clark L."/>
            <person name="Corton C."/>
            <person name="Cronin A."/>
            <person name="Doggett J."/>
            <person name="Dowd L."/>
            <person name="Feltwell T."/>
            <person name="Hance Z."/>
            <person name="Harris B."/>
            <person name="Hauser H."/>
            <person name="Holroyd S."/>
            <person name="Jagels K."/>
            <person name="James K.D."/>
            <person name="Lennard N."/>
            <person name="Line A."/>
            <person name="Mayes R."/>
            <person name="Moule S."/>
            <person name="Mungall K."/>
            <person name="Ormond D."/>
            <person name="Quail M.A."/>
            <person name="Rabbinowitsch E."/>
            <person name="Rutherford K.M."/>
            <person name="Sanders M."/>
            <person name="Sharp S."/>
            <person name="Simmonds M."/>
            <person name="Stevens K."/>
            <person name="Whitehead S."/>
            <person name="Barrell B.G."/>
            <person name="Spratt B.G."/>
            <person name="Parkhill J."/>
        </authorList>
    </citation>
    <scope>NUCLEOTIDE SEQUENCE [LARGE SCALE GENOMIC DNA]</scope>
    <source>
        <strain>MSSA476</strain>
    </source>
</reference>
<sequence>MLDIRLFRNEPVTVKSKIELRGDDSKVVDEILELDEQRRKLISATEEMKARRNKVSEEIALKKRNKENADDVIAEMRTLGDDIKEKDSQLNEIDNKMTGILCRIPNLISDDVPQGESDEDNVEVKKWGTPREFSFEPKAHWDIVEELKMADFDRAAKVSGARFVYLTNEGAQLERALMNYMITKHTTQHGYTEMMVPQLVNADTMYGTGQLPKFEEDLFKVEKEGLYTIPTAEVPLTNFYRNEIIQPGVLPEKFTGQSACFRSEAGSAGRDTRGLIRLHQFDKVEMVRFEQPEDSWNALEEMTTNAEAILEELGLPYRRVILCTGDIGFSASKTYDLEVWLPSYNDYKEISSCSNCTDFQARRANIRFKRDKAAKPELAHTLNGSGLAVGRTFAAIVENYQNEDGTVTIPEALVPFMGGKTQISKPVK</sequence>